<accession>E7F6F9</accession>
<gene>
    <name type="primary">klhl3</name>
</gene>
<name>KLHL3_DANRE</name>
<keyword id="KW-0009">Actin-binding</keyword>
<keyword id="KW-0963">Cytoplasm</keyword>
<keyword id="KW-0206">Cytoskeleton</keyword>
<keyword id="KW-0880">Kelch repeat</keyword>
<keyword id="KW-1185">Reference proteome</keyword>
<keyword id="KW-0677">Repeat</keyword>
<keyword id="KW-0833">Ubl conjugation pathway</keyword>
<evidence type="ECO:0000250" key="1">
    <source>
        <dbReference type="UniProtKB" id="Q9UH77"/>
    </source>
</evidence>
<evidence type="ECO:0000255" key="2">
    <source>
        <dbReference type="PROSITE-ProRule" id="PRU00037"/>
    </source>
</evidence>
<evidence type="ECO:0000305" key="3"/>
<reference key="1">
    <citation type="journal article" date="2013" name="Nature">
        <title>The zebrafish reference genome sequence and its relationship to the human genome.</title>
        <authorList>
            <person name="Howe K."/>
            <person name="Clark M.D."/>
            <person name="Torroja C.F."/>
            <person name="Torrance J."/>
            <person name="Berthelot C."/>
            <person name="Muffato M."/>
            <person name="Collins J.E."/>
            <person name="Humphray S."/>
            <person name="McLaren K."/>
            <person name="Matthews L."/>
            <person name="McLaren S."/>
            <person name="Sealy I."/>
            <person name="Caccamo M."/>
            <person name="Churcher C."/>
            <person name="Scott C."/>
            <person name="Barrett J.C."/>
            <person name="Koch R."/>
            <person name="Rauch G.J."/>
            <person name="White S."/>
            <person name="Chow W."/>
            <person name="Kilian B."/>
            <person name="Quintais L.T."/>
            <person name="Guerra-Assuncao J.A."/>
            <person name="Zhou Y."/>
            <person name="Gu Y."/>
            <person name="Yen J."/>
            <person name="Vogel J.H."/>
            <person name="Eyre T."/>
            <person name="Redmond S."/>
            <person name="Banerjee R."/>
            <person name="Chi J."/>
            <person name="Fu B."/>
            <person name="Langley E."/>
            <person name="Maguire S.F."/>
            <person name="Laird G.K."/>
            <person name="Lloyd D."/>
            <person name="Kenyon E."/>
            <person name="Donaldson S."/>
            <person name="Sehra H."/>
            <person name="Almeida-King J."/>
            <person name="Loveland J."/>
            <person name="Trevanion S."/>
            <person name="Jones M."/>
            <person name="Quail M."/>
            <person name="Willey D."/>
            <person name="Hunt A."/>
            <person name="Burton J."/>
            <person name="Sims S."/>
            <person name="McLay K."/>
            <person name="Plumb B."/>
            <person name="Davis J."/>
            <person name="Clee C."/>
            <person name="Oliver K."/>
            <person name="Clark R."/>
            <person name="Riddle C."/>
            <person name="Elliot D."/>
            <person name="Threadgold G."/>
            <person name="Harden G."/>
            <person name="Ware D."/>
            <person name="Begum S."/>
            <person name="Mortimore B."/>
            <person name="Kerry G."/>
            <person name="Heath P."/>
            <person name="Phillimore B."/>
            <person name="Tracey A."/>
            <person name="Corby N."/>
            <person name="Dunn M."/>
            <person name="Johnson C."/>
            <person name="Wood J."/>
            <person name="Clark S."/>
            <person name="Pelan S."/>
            <person name="Griffiths G."/>
            <person name="Smith M."/>
            <person name="Glithero R."/>
            <person name="Howden P."/>
            <person name="Barker N."/>
            <person name="Lloyd C."/>
            <person name="Stevens C."/>
            <person name="Harley J."/>
            <person name="Holt K."/>
            <person name="Panagiotidis G."/>
            <person name="Lovell J."/>
            <person name="Beasley H."/>
            <person name="Henderson C."/>
            <person name="Gordon D."/>
            <person name="Auger K."/>
            <person name="Wright D."/>
            <person name="Collins J."/>
            <person name="Raisen C."/>
            <person name="Dyer L."/>
            <person name="Leung K."/>
            <person name="Robertson L."/>
            <person name="Ambridge K."/>
            <person name="Leongamornlert D."/>
            <person name="McGuire S."/>
            <person name="Gilderthorp R."/>
            <person name="Griffiths C."/>
            <person name="Manthravadi D."/>
            <person name="Nichol S."/>
            <person name="Barker G."/>
            <person name="Whitehead S."/>
            <person name="Kay M."/>
            <person name="Brown J."/>
            <person name="Murnane C."/>
            <person name="Gray E."/>
            <person name="Humphries M."/>
            <person name="Sycamore N."/>
            <person name="Barker D."/>
            <person name="Saunders D."/>
            <person name="Wallis J."/>
            <person name="Babbage A."/>
            <person name="Hammond S."/>
            <person name="Mashreghi-Mohammadi M."/>
            <person name="Barr L."/>
            <person name="Martin S."/>
            <person name="Wray P."/>
            <person name="Ellington A."/>
            <person name="Matthews N."/>
            <person name="Ellwood M."/>
            <person name="Woodmansey R."/>
            <person name="Clark G."/>
            <person name="Cooper J."/>
            <person name="Tromans A."/>
            <person name="Grafham D."/>
            <person name="Skuce C."/>
            <person name="Pandian R."/>
            <person name="Andrews R."/>
            <person name="Harrison E."/>
            <person name="Kimberley A."/>
            <person name="Garnett J."/>
            <person name="Fosker N."/>
            <person name="Hall R."/>
            <person name="Garner P."/>
            <person name="Kelly D."/>
            <person name="Bird C."/>
            <person name="Palmer S."/>
            <person name="Gehring I."/>
            <person name="Berger A."/>
            <person name="Dooley C.M."/>
            <person name="Ersan-Urun Z."/>
            <person name="Eser C."/>
            <person name="Geiger H."/>
            <person name="Geisler M."/>
            <person name="Karotki L."/>
            <person name="Kirn A."/>
            <person name="Konantz J."/>
            <person name="Konantz M."/>
            <person name="Oberlander M."/>
            <person name="Rudolph-Geiger S."/>
            <person name="Teucke M."/>
            <person name="Lanz C."/>
            <person name="Raddatz G."/>
            <person name="Osoegawa K."/>
            <person name="Zhu B."/>
            <person name="Rapp A."/>
            <person name="Widaa S."/>
            <person name="Langford C."/>
            <person name="Yang F."/>
            <person name="Schuster S.C."/>
            <person name="Carter N.P."/>
            <person name="Harrow J."/>
            <person name="Ning Z."/>
            <person name="Herrero J."/>
            <person name="Searle S.M."/>
            <person name="Enright A."/>
            <person name="Geisler R."/>
            <person name="Plasterk R.H."/>
            <person name="Lee C."/>
            <person name="Westerfield M."/>
            <person name="de Jong P.J."/>
            <person name="Zon L.I."/>
            <person name="Postlethwait J.H."/>
            <person name="Nusslein-Volhard C."/>
            <person name="Hubbard T.J."/>
            <person name="Roest Crollius H."/>
            <person name="Rogers J."/>
            <person name="Stemple D.L."/>
        </authorList>
    </citation>
    <scope>NUCLEOTIDE SEQUENCE [LARGE SCALE GENOMIC DNA]</scope>
    <source>
        <strain>Tuebingen</strain>
    </source>
</reference>
<feature type="chain" id="PRO_0000417533" description="Kelch-like protein 3">
    <location>
        <begin position="1"/>
        <end position="601"/>
    </location>
</feature>
<feature type="domain" description="BTB" evidence="2">
    <location>
        <begin position="63"/>
        <end position="130"/>
    </location>
</feature>
<feature type="domain" description="BACK">
    <location>
        <begin position="165"/>
        <end position="268"/>
    </location>
</feature>
<feature type="repeat" description="Kelch 1">
    <location>
        <begin position="316"/>
        <end position="361"/>
    </location>
</feature>
<feature type="repeat" description="Kelch 2">
    <location>
        <begin position="362"/>
        <end position="408"/>
    </location>
</feature>
<feature type="repeat" description="Kelch 3">
    <location>
        <begin position="410"/>
        <end position="455"/>
    </location>
</feature>
<feature type="repeat" description="Kelch 4">
    <location>
        <begin position="456"/>
        <end position="504"/>
    </location>
</feature>
<feature type="repeat" description="Kelch 5">
    <location>
        <begin position="505"/>
        <end position="551"/>
    </location>
</feature>
<feature type="repeat" description="Kelch 6">
    <location>
        <begin position="553"/>
        <end position="599"/>
    </location>
</feature>
<protein>
    <recommendedName>
        <fullName>Kelch-like protein 3</fullName>
    </recommendedName>
</protein>
<comment type="function">
    <text evidence="1">Substrate-specific adapter of a BCR (BTB-CUL3-RBX1) E3 ubiquitin ligase complex that acts as a regulator of ion transport in the distal nephron. The BCR(KLHL3) complex acts by mediating ubiquitination and degradation of WNK1 and WNK4, two activators of Na-Cl cotransporter SLC12A3/NCC in distal convoluted tubule cells of kidney, thereby regulating NaCl reabsorption.</text>
</comment>
<comment type="pathway">
    <text evidence="1">Protein modification; protein ubiquitination.</text>
</comment>
<comment type="subunit">
    <text evidence="1">Component of the BCR(KLHL3) E3 ubiquitin ligase complex, at least composed of cul3 and klhl3 and rbx1.</text>
</comment>
<comment type="subcellular location">
    <subcellularLocation>
        <location evidence="1">Cytoplasm</location>
        <location evidence="1">Cytoskeleton</location>
    </subcellularLocation>
    <subcellularLocation>
        <location evidence="1">Cytoplasm</location>
        <location evidence="1">Cytosol</location>
    </subcellularLocation>
</comment>
<comment type="similarity">
    <text evidence="3">Belongs to the KLHL3 family.</text>
</comment>
<proteinExistence type="inferred from homology"/>
<sequence length="601" mass="66868">MVLWGFFLRFRFFLTCGRNCIQKTLDSQDDAKDPGLHTFSHTHMRKAFLLMNDLRSHSRKMLCDVLLVAGEVEIPAHRVVLASCSPYFCAMFTGDMSESKANHVEIRDVDGQTLLKLVDYIYSAEIEVSEENVQVLLPAASLLQLMDVRQVCCDFLQTQLHPTNCLGIRAFADLHACTVLLSQAHAYAAEQHFTDVMVGEEFMALSLQQVCSLISSDKLTVSTEEKVFEAMVAWIKHDKEARLEHMPKLMEHVRLPLLSRDYLVQIVEEEPLIKNNNTCKDFLIEAMKYHLLPADQRHLIKTDRTRPRTPISLPKVMMVVGGQAPKAIRSVECYDFQEDRWYQVADLPSRRCRAGVVYMAGKVYAVGGFNGSLRVRTVDVYDGLKDQWSSIPSMQERRSTLGAAVLGDLLYAVGGFDGSTGLSSVEAYNPKANEWMFVAPMNTRRSSVGVGVVDGKLYAVGGYDGASRQCLSTVEEFNPVSNKWCYVSDMSTRRSGAGVGVLSGQLYAAGGHDGPLVRKSVEVYDPTTNTWRQVCDMNMCRRNAGVCAINGLLYVIGGDDGSCNLSSVEYYDPAADKWSLIPTNMSNGRSYAGVSVIDKPL</sequence>
<dbReference type="EMBL" id="BX005228">
    <property type="status" value="NOT_ANNOTATED_CDS"/>
    <property type="molecule type" value="Genomic_DNA"/>
</dbReference>
<dbReference type="SMR" id="E7F6F9"/>
<dbReference type="FunCoup" id="E7F6F9">
    <property type="interactions" value="96"/>
</dbReference>
<dbReference type="STRING" id="7955.ENSDARP00000142614"/>
<dbReference type="PaxDb" id="7955-ENSDARP00000073620"/>
<dbReference type="AGR" id="ZFIN:ZDB-GENE-120203-4"/>
<dbReference type="ZFIN" id="ZDB-GENE-120203-4">
    <property type="gene designation" value="klhl3"/>
</dbReference>
<dbReference type="eggNOG" id="KOG4441">
    <property type="taxonomic scope" value="Eukaryota"/>
</dbReference>
<dbReference type="HOGENOM" id="CLU_004253_14_2_1"/>
<dbReference type="InParanoid" id="E7F6F9"/>
<dbReference type="PhylomeDB" id="E7F6F9"/>
<dbReference type="TreeFam" id="TF329218"/>
<dbReference type="Reactome" id="R-DRE-8951664">
    <property type="pathway name" value="Neddylation"/>
</dbReference>
<dbReference type="Reactome" id="R-DRE-983168">
    <property type="pathway name" value="Antigen processing: Ubiquitination &amp; Proteasome degradation"/>
</dbReference>
<dbReference type="UniPathway" id="UPA00143"/>
<dbReference type="PRO" id="PR:E7F6F9"/>
<dbReference type="Proteomes" id="UP000000437">
    <property type="component" value="Unplaced"/>
</dbReference>
<dbReference type="GO" id="GO:0031463">
    <property type="term" value="C:Cul3-RING ubiquitin ligase complex"/>
    <property type="evidence" value="ECO:0000250"/>
    <property type="project" value="UniProtKB"/>
</dbReference>
<dbReference type="GO" id="GO:0005737">
    <property type="term" value="C:cytoplasm"/>
    <property type="evidence" value="ECO:0000318"/>
    <property type="project" value="GO_Central"/>
</dbReference>
<dbReference type="GO" id="GO:0005856">
    <property type="term" value="C:cytoskeleton"/>
    <property type="evidence" value="ECO:0007669"/>
    <property type="project" value="UniProtKB-SubCell"/>
</dbReference>
<dbReference type="GO" id="GO:0005829">
    <property type="term" value="C:cytosol"/>
    <property type="evidence" value="ECO:0000250"/>
    <property type="project" value="UniProtKB"/>
</dbReference>
<dbReference type="GO" id="GO:0003779">
    <property type="term" value="F:actin binding"/>
    <property type="evidence" value="ECO:0007669"/>
    <property type="project" value="UniProtKB-KW"/>
</dbReference>
<dbReference type="GO" id="GO:1990756">
    <property type="term" value="F:ubiquitin-like ligase-substrate adaptor activity"/>
    <property type="evidence" value="ECO:0000250"/>
    <property type="project" value="UniProtKB"/>
</dbReference>
<dbReference type="GO" id="GO:0072156">
    <property type="term" value="P:distal tubule morphogenesis"/>
    <property type="evidence" value="ECO:0000250"/>
    <property type="project" value="UniProtKB"/>
</dbReference>
<dbReference type="GO" id="GO:0050801">
    <property type="term" value="P:monoatomic ion homeostasis"/>
    <property type="evidence" value="ECO:0000250"/>
    <property type="project" value="UniProtKB"/>
</dbReference>
<dbReference type="GO" id="GO:0043161">
    <property type="term" value="P:proteasome-mediated ubiquitin-dependent protein catabolic process"/>
    <property type="evidence" value="ECO:0000318"/>
    <property type="project" value="GO_Central"/>
</dbReference>
<dbReference type="GO" id="GO:0070936">
    <property type="term" value="P:protein K48-linked ubiquitination"/>
    <property type="evidence" value="ECO:0000250"/>
    <property type="project" value="UniProtKB"/>
</dbReference>
<dbReference type="GO" id="GO:0016567">
    <property type="term" value="P:protein ubiquitination"/>
    <property type="evidence" value="ECO:0000250"/>
    <property type="project" value="UniProtKB"/>
</dbReference>
<dbReference type="GO" id="GO:0070294">
    <property type="term" value="P:renal sodium ion absorption"/>
    <property type="evidence" value="ECO:0000250"/>
    <property type="project" value="UniProtKB"/>
</dbReference>
<dbReference type="GO" id="GO:0006511">
    <property type="term" value="P:ubiquitin-dependent protein catabolic process"/>
    <property type="evidence" value="ECO:0000250"/>
    <property type="project" value="UniProtKB"/>
</dbReference>
<dbReference type="CDD" id="cd18513">
    <property type="entry name" value="BACK_KLHL3"/>
    <property type="match status" value="1"/>
</dbReference>
<dbReference type="CDD" id="cd18235">
    <property type="entry name" value="BTB_POZ_KLHL2-like"/>
    <property type="match status" value="1"/>
</dbReference>
<dbReference type="FunFam" id="1.25.40.420:FF:000001">
    <property type="entry name" value="Kelch-like family member 12"/>
    <property type="match status" value="1"/>
</dbReference>
<dbReference type="FunFam" id="2.120.10.80:FF:000002">
    <property type="entry name" value="Kelch-like family member 2"/>
    <property type="match status" value="1"/>
</dbReference>
<dbReference type="FunFam" id="3.30.710.10:FF:000001">
    <property type="entry name" value="Kelch-like family member 20"/>
    <property type="match status" value="1"/>
</dbReference>
<dbReference type="Gene3D" id="1.25.40.420">
    <property type="match status" value="1"/>
</dbReference>
<dbReference type="Gene3D" id="2.120.10.80">
    <property type="entry name" value="Kelch-type beta propeller"/>
    <property type="match status" value="1"/>
</dbReference>
<dbReference type="Gene3D" id="3.30.710.10">
    <property type="entry name" value="Potassium Channel Kv1.1, Chain A"/>
    <property type="match status" value="1"/>
</dbReference>
<dbReference type="InterPro" id="IPR011705">
    <property type="entry name" value="BACK"/>
</dbReference>
<dbReference type="InterPro" id="IPR017096">
    <property type="entry name" value="BTB-kelch_protein"/>
</dbReference>
<dbReference type="InterPro" id="IPR000210">
    <property type="entry name" value="BTB/POZ_dom"/>
</dbReference>
<dbReference type="InterPro" id="IPR011043">
    <property type="entry name" value="Gal_Oxase/kelch_b-propeller"/>
</dbReference>
<dbReference type="InterPro" id="IPR015915">
    <property type="entry name" value="Kelch-typ_b-propeller"/>
</dbReference>
<dbReference type="InterPro" id="IPR006652">
    <property type="entry name" value="Kelch_1"/>
</dbReference>
<dbReference type="InterPro" id="IPR030578">
    <property type="entry name" value="KLHL3_BACK"/>
</dbReference>
<dbReference type="InterPro" id="IPR011333">
    <property type="entry name" value="SKP1/BTB/POZ_sf"/>
</dbReference>
<dbReference type="PANTHER" id="PTHR24412">
    <property type="entry name" value="KELCH PROTEIN"/>
    <property type="match status" value="1"/>
</dbReference>
<dbReference type="PANTHER" id="PTHR24412:SF179">
    <property type="entry name" value="KELCH-LIKE PROTEIN 3"/>
    <property type="match status" value="1"/>
</dbReference>
<dbReference type="Pfam" id="PF07707">
    <property type="entry name" value="BACK"/>
    <property type="match status" value="1"/>
</dbReference>
<dbReference type="Pfam" id="PF00651">
    <property type="entry name" value="BTB"/>
    <property type="match status" value="1"/>
</dbReference>
<dbReference type="Pfam" id="PF01344">
    <property type="entry name" value="Kelch_1"/>
    <property type="match status" value="6"/>
</dbReference>
<dbReference type="PIRSF" id="PIRSF037037">
    <property type="entry name" value="Kelch-like_protein_gigaxonin"/>
    <property type="match status" value="1"/>
</dbReference>
<dbReference type="SMART" id="SM00875">
    <property type="entry name" value="BACK"/>
    <property type="match status" value="1"/>
</dbReference>
<dbReference type="SMART" id="SM00225">
    <property type="entry name" value="BTB"/>
    <property type="match status" value="1"/>
</dbReference>
<dbReference type="SMART" id="SM00612">
    <property type="entry name" value="Kelch"/>
    <property type="match status" value="6"/>
</dbReference>
<dbReference type="SUPFAM" id="SSF50965">
    <property type="entry name" value="Galactose oxidase, central domain"/>
    <property type="match status" value="1"/>
</dbReference>
<dbReference type="SUPFAM" id="SSF54695">
    <property type="entry name" value="POZ domain"/>
    <property type="match status" value="1"/>
</dbReference>
<dbReference type="PROSITE" id="PS50097">
    <property type="entry name" value="BTB"/>
    <property type="match status" value="1"/>
</dbReference>
<organism>
    <name type="scientific">Danio rerio</name>
    <name type="common">Zebrafish</name>
    <name type="synonym">Brachydanio rerio</name>
    <dbReference type="NCBI Taxonomy" id="7955"/>
    <lineage>
        <taxon>Eukaryota</taxon>
        <taxon>Metazoa</taxon>
        <taxon>Chordata</taxon>
        <taxon>Craniata</taxon>
        <taxon>Vertebrata</taxon>
        <taxon>Euteleostomi</taxon>
        <taxon>Actinopterygii</taxon>
        <taxon>Neopterygii</taxon>
        <taxon>Teleostei</taxon>
        <taxon>Ostariophysi</taxon>
        <taxon>Cypriniformes</taxon>
        <taxon>Danionidae</taxon>
        <taxon>Danioninae</taxon>
        <taxon>Danio</taxon>
    </lineage>
</organism>